<gene>
    <name type="primary">gh</name>
</gene>
<feature type="signal peptide" evidence="1">
    <location>
        <begin position="1"/>
        <end position="17"/>
    </location>
</feature>
<feature type="chain" id="PRO_0000033050" description="Somatotropin">
    <location>
        <begin position="18"/>
        <end position="204"/>
    </location>
</feature>
<feature type="binding site" evidence="1">
    <location>
        <position position="36"/>
    </location>
    <ligand>
        <name>Zn(2+)</name>
        <dbReference type="ChEBI" id="CHEBI:29105"/>
    </ligand>
</feature>
<feature type="binding site" evidence="1">
    <location>
        <position position="186"/>
    </location>
    <ligand>
        <name>Zn(2+)</name>
        <dbReference type="ChEBI" id="CHEBI:29105"/>
    </ligand>
</feature>
<feature type="modified residue" description="Pyrrolidone carboxylic acid" evidence="1">
    <location>
        <position position="18"/>
    </location>
</feature>
<feature type="disulfide bond" evidence="1">
    <location>
        <begin position="69"/>
        <end position="177"/>
    </location>
</feature>
<feature type="disulfide bond" evidence="1">
    <location>
        <begin position="194"/>
        <end position="202"/>
    </location>
</feature>
<protein>
    <recommendedName>
        <fullName>Somatotropin</fullName>
    </recommendedName>
    <alternativeName>
        <fullName>Growth hormone</fullName>
    </alternativeName>
</protein>
<name>SOMA_LARCR</name>
<comment type="function">
    <text>Growth hormone plays an important role in growth control and is involved in the regulation of several anabolic processes. Implicated as an osmoregulatory substance important for seawater adaptation.</text>
</comment>
<comment type="subcellular location">
    <subcellularLocation>
        <location>Secreted</location>
    </subcellularLocation>
</comment>
<comment type="similarity">
    <text evidence="2">Belongs to the somatotropin/prolactin family.</text>
</comment>
<dbReference type="EMBL" id="AF231941">
    <property type="protein sequence ID" value="AAF42928.2"/>
    <property type="molecule type" value="mRNA"/>
</dbReference>
<dbReference type="RefSeq" id="NP_001290254.1">
    <property type="nucleotide sequence ID" value="NM_001303325.1"/>
</dbReference>
<dbReference type="SMR" id="Q9I9M4"/>
<dbReference type="GeneID" id="104931893"/>
<dbReference type="KEGG" id="lco:104931893"/>
<dbReference type="CTD" id="2688"/>
<dbReference type="eggNOG" id="ENOG502R5GJ">
    <property type="taxonomic scope" value="Eukaryota"/>
</dbReference>
<dbReference type="OrthoDB" id="9925773at2759"/>
<dbReference type="GO" id="GO:0005615">
    <property type="term" value="C:extracellular space"/>
    <property type="evidence" value="ECO:0007669"/>
    <property type="project" value="InterPro"/>
</dbReference>
<dbReference type="GO" id="GO:0070186">
    <property type="term" value="F:growth hormone activity"/>
    <property type="evidence" value="ECO:0007669"/>
    <property type="project" value="TreeGrafter"/>
</dbReference>
<dbReference type="GO" id="GO:0005131">
    <property type="term" value="F:growth hormone receptor binding"/>
    <property type="evidence" value="ECO:0007669"/>
    <property type="project" value="InterPro"/>
</dbReference>
<dbReference type="GO" id="GO:0046872">
    <property type="term" value="F:metal ion binding"/>
    <property type="evidence" value="ECO:0007669"/>
    <property type="project" value="UniProtKB-KW"/>
</dbReference>
<dbReference type="GO" id="GO:0048513">
    <property type="term" value="P:animal organ development"/>
    <property type="evidence" value="ECO:0007669"/>
    <property type="project" value="TreeGrafter"/>
</dbReference>
<dbReference type="GO" id="GO:0060396">
    <property type="term" value="P:growth hormone receptor signaling pathway"/>
    <property type="evidence" value="ECO:0007669"/>
    <property type="project" value="TreeGrafter"/>
</dbReference>
<dbReference type="GO" id="GO:0045927">
    <property type="term" value="P:positive regulation of growth"/>
    <property type="evidence" value="ECO:0007669"/>
    <property type="project" value="TreeGrafter"/>
</dbReference>
<dbReference type="GO" id="GO:0046427">
    <property type="term" value="P:positive regulation of receptor signaling pathway via JAK-STAT"/>
    <property type="evidence" value="ECO:0007669"/>
    <property type="project" value="TreeGrafter"/>
</dbReference>
<dbReference type="GO" id="GO:0031667">
    <property type="term" value="P:response to nutrient levels"/>
    <property type="evidence" value="ECO:0007669"/>
    <property type="project" value="TreeGrafter"/>
</dbReference>
<dbReference type="CDD" id="cd10285">
    <property type="entry name" value="somatotropin_like"/>
    <property type="match status" value="1"/>
</dbReference>
<dbReference type="FunFam" id="1.20.1250.10:FF:000009">
    <property type="entry name" value="Growth hormone"/>
    <property type="match status" value="1"/>
</dbReference>
<dbReference type="Gene3D" id="1.20.1250.10">
    <property type="match status" value="1"/>
</dbReference>
<dbReference type="InterPro" id="IPR009079">
    <property type="entry name" value="4_helix_cytokine-like_core"/>
</dbReference>
<dbReference type="InterPro" id="IPR034975">
    <property type="entry name" value="Somatotropin"/>
</dbReference>
<dbReference type="InterPro" id="IPR001400">
    <property type="entry name" value="Somatotropin/Prolactin"/>
</dbReference>
<dbReference type="InterPro" id="IPR018116">
    <property type="entry name" value="Somatotropin_CS"/>
</dbReference>
<dbReference type="PANTHER" id="PTHR11417:SF2">
    <property type="entry name" value="SOMATOTROPIN"/>
    <property type="match status" value="1"/>
</dbReference>
<dbReference type="PANTHER" id="PTHR11417">
    <property type="entry name" value="SOMATOTROPIN,PROLACTIN"/>
    <property type="match status" value="1"/>
</dbReference>
<dbReference type="Pfam" id="PF00103">
    <property type="entry name" value="Hormone_1"/>
    <property type="match status" value="1"/>
</dbReference>
<dbReference type="PRINTS" id="PR00836">
    <property type="entry name" value="SOMATOTROPIN"/>
</dbReference>
<dbReference type="SUPFAM" id="SSF47266">
    <property type="entry name" value="4-helical cytokines"/>
    <property type="match status" value="1"/>
</dbReference>
<dbReference type="PROSITE" id="PS00266">
    <property type="entry name" value="SOMATOTROPIN_1"/>
    <property type="match status" value="1"/>
</dbReference>
<dbReference type="PROSITE" id="PS00338">
    <property type="entry name" value="SOMATOTROPIN_2"/>
    <property type="match status" value="1"/>
</dbReference>
<organism>
    <name type="scientific">Larimichthys crocea</name>
    <name type="common">Large yellow croaker</name>
    <name type="synonym">Pseudosciaena crocea</name>
    <dbReference type="NCBI Taxonomy" id="215358"/>
    <lineage>
        <taxon>Eukaryota</taxon>
        <taxon>Metazoa</taxon>
        <taxon>Chordata</taxon>
        <taxon>Craniata</taxon>
        <taxon>Vertebrata</taxon>
        <taxon>Euteleostomi</taxon>
        <taxon>Actinopterygii</taxon>
        <taxon>Neopterygii</taxon>
        <taxon>Teleostei</taxon>
        <taxon>Neoteleostei</taxon>
        <taxon>Acanthomorphata</taxon>
        <taxon>Eupercaria</taxon>
        <taxon>Sciaenidae</taxon>
        <taxon>Larimichthys</taxon>
    </lineage>
</organism>
<reference key="1">
    <citation type="submission" date="2000-11" db="EMBL/GenBank/DDBJ databases">
        <title>Cloning and sequencing of Pseudosciaena crocea growth hormone (GH) cDNA.</title>
        <authorList>
            <person name="Jiang S."/>
            <person name="Ma H."/>
            <person name="Huang Q."/>
            <person name="Rao P."/>
        </authorList>
    </citation>
    <scope>NUCLEOTIDE SEQUENCE [MRNA]</scope>
    <source>
        <tissue>Pituitary</tissue>
    </source>
</reference>
<keyword id="KW-1015">Disulfide bond</keyword>
<keyword id="KW-0372">Hormone</keyword>
<keyword id="KW-0479">Metal-binding</keyword>
<keyword id="KW-0873">Pyrrolidone carboxylic acid</keyword>
<keyword id="KW-0964">Secreted</keyword>
<keyword id="KW-0732">Signal</keyword>
<keyword id="KW-0862">Zinc</keyword>
<sequence>MDRVLLLLSVLTLGVSSQQIIENQRLFSMDATRVQHLHLLAQRLFSDFESSLQTEEQRQLNKIFLQDFCNSDYIISPIDKHETQRSSVLKLLSISYRLVESWEFPSRSLSGGSAPRNQISPKLSELKMGILLLIRANQDAAEIFPDNSALQLAPYGNYYQSLSGEESLRRTYELLACFKKDMHKVETYLTVAKCRLSPEANCTL</sequence>
<accession>Q9I9M4</accession>
<proteinExistence type="evidence at transcript level"/>
<evidence type="ECO:0000250" key="1"/>
<evidence type="ECO:0000305" key="2"/>